<accession>A7HJX5</accession>
<protein>
    <recommendedName>
        <fullName evidence="1">Valine--tRNA ligase</fullName>
        <ecNumber evidence="1">6.1.1.9</ecNumber>
    </recommendedName>
    <alternativeName>
        <fullName evidence="1">Valyl-tRNA synthetase</fullName>
        <shortName evidence="1">ValRS</shortName>
    </alternativeName>
</protein>
<name>SYV_FERNB</name>
<reference key="1">
    <citation type="submission" date="2007-07" db="EMBL/GenBank/DDBJ databases">
        <title>Complete sequence of Fervidobacterium nodosum Rt17-B1.</title>
        <authorList>
            <consortium name="US DOE Joint Genome Institute"/>
            <person name="Copeland A."/>
            <person name="Lucas S."/>
            <person name="Lapidus A."/>
            <person name="Barry K."/>
            <person name="Glavina del Rio T."/>
            <person name="Dalin E."/>
            <person name="Tice H."/>
            <person name="Pitluck S."/>
            <person name="Saunders E."/>
            <person name="Brettin T."/>
            <person name="Bruce D."/>
            <person name="Detter J.C."/>
            <person name="Han C."/>
            <person name="Schmutz J."/>
            <person name="Larimer F."/>
            <person name="Land M."/>
            <person name="Hauser L."/>
            <person name="Kyrpides N."/>
            <person name="Mikhailova N."/>
            <person name="Nelson K."/>
            <person name="Gogarten J.P."/>
            <person name="Noll K."/>
            <person name="Richardson P."/>
        </authorList>
    </citation>
    <scope>NUCLEOTIDE SEQUENCE [LARGE SCALE GENOMIC DNA]</scope>
    <source>
        <strain>ATCC 35602 / DSM 5306 / Rt17-B1</strain>
    </source>
</reference>
<organism>
    <name type="scientific">Fervidobacterium nodosum (strain ATCC 35602 / DSM 5306 / Rt17-B1)</name>
    <dbReference type="NCBI Taxonomy" id="381764"/>
    <lineage>
        <taxon>Bacteria</taxon>
        <taxon>Thermotogati</taxon>
        <taxon>Thermotogota</taxon>
        <taxon>Thermotogae</taxon>
        <taxon>Thermotogales</taxon>
        <taxon>Fervidobacteriaceae</taxon>
        <taxon>Fervidobacterium</taxon>
    </lineage>
</organism>
<keyword id="KW-0030">Aminoacyl-tRNA synthetase</keyword>
<keyword id="KW-0067">ATP-binding</keyword>
<keyword id="KW-0175">Coiled coil</keyword>
<keyword id="KW-0963">Cytoplasm</keyword>
<keyword id="KW-0436">Ligase</keyword>
<keyword id="KW-0547">Nucleotide-binding</keyword>
<keyword id="KW-0648">Protein biosynthesis</keyword>
<keyword id="KW-1185">Reference proteome</keyword>
<gene>
    <name evidence="1" type="primary">valS</name>
    <name type="ordered locus">Fnod_0343</name>
</gene>
<proteinExistence type="inferred from homology"/>
<comment type="function">
    <text evidence="1">Catalyzes the attachment of valine to tRNA(Val). As ValRS can inadvertently accommodate and process structurally similar amino acids such as threonine, to avoid such errors, it has a 'posttransfer' editing activity that hydrolyzes mischarged Thr-tRNA(Val) in a tRNA-dependent manner.</text>
</comment>
<comment type="catalytic activity">
    <reaction evidence="1">
        <text>tRNA(Val) + L-valine + ATP = L-valyl-tRNA(Val) + AMP + diphosphate</text>
        <dbReference type="Rhea" id="RHEA:10704"/>
        <dbReference type="Rhea" id="RHEA-COMP:9672"/>
        <dbReference type="Rhea" id="RHEA-COMP:9708"/>
        <dbReference type="ChEBI" id="CHEBI:30616"/>
        <dbReference type="ChEBI" id="CHEBI:33019"/>
        <dbReference type="ChEBI" id="CHEBI:57762"/>
        <dbReference type="ChEBI" id="CHEBI:78442"/>
        <dbReference type="ChEBI" id="CHEBI:78537"/>
        <dbReference type="ChEBI" id="CHEBI:456215"/>
        <dbReference type="EC" id="6.1.1.9"/>
    </reaction>
</comment>
<comment type="subunit">
    <text evidence="1">Monomer.</text>
</comment>
<comment type="subcellular location">
    <subcellularLocation>
        <location evidence="1">Cytoplasm</location>
    </subcellularLocation>
</comment>
<comment type="domain">
    <text evidence="1">ValRS has two distinct active sites: one for aminoacylation and one for editing. The misactivated threonine is translocated from the active site to the editing site.</text>
</comment>
<comment type="domain">
    <text evidence="1">The C-terminal coiled-coil domain is crucial for aminoacylation activity.</text>
</comment>
<comment type="similarity">
    <text evidence="1">Belongs to the class-I aminoacyl-tRNA synthetase family. ValS type 1 subfamily.</text>
</comment>
<feature type="chain" id="PRO_1000073714" description="Valine--tRNA ligase">
    <location>
        <begin position="1"/>
        <end position="867"/>
    </location>
</feature>
<feature type="coiled-coil region" evidence="1">
    <location>
        <begin position="794"/>
        <end position="867"/>
    </location>
</feature>
<feature type="short sequence motif" description="'HIGH' region">
    <location>
        <begin position="42"/>
        <end position="52"/>
    </location>
</feature>
<feature type="short sequence motif" description="'KMSKS' region">
    <location>
        <begin position="521"/>
        <end position="525"/>
    </location>
</feature>
<feature type="binding site" evidence="1">
    <location>
        <position position="524"/>
    </location>
    <ligand>
        <name>ATP</name>
        <dbReference type="ChEBI" id="CHEBI:30616"/>
    </ligand>
</feature>
<sequence>MEIGTRYDPKNIEMKWYKHWLEKKYFTPRGAGPKYSIVIPPPNITGKIHMGHALNITIQDILSRYKRMKGFDVLWLPGEDHAGIATQTAVERYLSTQGKSRRDFSRDEFLNIVWNWANKYRQEIKNQIMSIGASVDWTRERFTLDEGLSKAVRKVFVDMYKKGLIYKGKYIVNWCHRCGTVLSDEEVDYHEEEGALYHIKYPIKGEDDYIIIATTRPETMLGDTAVAVHPSDERYRKYVGKIAILPLVGREIPVIADNYVDPSFGTGALKVTPAHDTNDYLIGQRHNLPFVDIFDENIVINENGGKFKGMTAEQARKAVVEELEAQGYLVKIEKMKHSVGRCYRCDTVVEPRLMDQWFVSMKPLAKRAIEAVENGEVTFIPDRWKKVYLNWMYEIRDWCISRQLWWGHRIPVWQCQDCGHYNVSENEPVKCEKCGSTNLKQDEDVLDTWFSSALWPFSTMGWPEKTPDLERYYPTDVLVTGFDIIFFWVARMIMMGYEFMDEKPFKEVYIHQLVRDKYGRKMSKSLGNGIDPLEVIDEYGADPMRFTLAILAAQGRDLKLDVRFFDTYKKFANKIWNATRFVLMNLEDFEKVDIKLSKLKLSDKWILSRLQKTIQKISEALDSYDFNIAANEIYNFFWDELCDWYIEAVKNRLKTEERKVVQNVLVYVLDMSLRLLHPFMPFLTEELWTKLPTSGESIVVAQWPEIEENFIDENSEKRFMQLMNIIRGIRNIRAEVNVPQSTKVKTFVKGTLTDEEQEYIKFLGNVESIEFVEKRPELSATAYISLENEVYVSLGTLIDVKSEVERLRKKVEKLKSDMEKFAKKLEDENFLKNAPEDIVEETKEKQRLFQEQIARIEQIISDLEAKA</sequence>
<evidence type="ECO:0000255" key="1">
    <source>
        <dbReference type="HAMAP-Rule" id="MF_02004"/>
    </source>
</evidence>
<dbReference type="EC" id="6.1.1.9" evidence="1"/>
<dbReference type="EMBL" id="CP000771">
    <property type="protein sequence ID" value="ABS60208.1"/>
    <property type="molecule type" value="Genomic_DNA"/>
</dbReference>
<dbReference type="SMR" id="A7HJX5"/>
<dbReference type="STRING" id="381764.Fnod_0343"/>
<dbReference type="KEGG" id="fno:Fnod_0343"/>
<dbReference type="eggNOG" id="COG0525">
    <property type="taxonomic scope" value="Bacteria"/>
</dbReference>
<dbReference type="HOGENOM" id="CLU_001493_0_2_0"/>
<dbReference type="OrthoDB" id="9810365at2"/>
<dbReference type="Proteomes" id="UP000002415">
    <property type="component" value="Chromosome"/>
</dbReference>
<dbReference type="GO" id="GO:0005829">
    <property type="term" value="C:cytosol"/>
    <property type="evidence" value="ECO:0007669"/>
    <property type="project" value="TreeGrafter"/>
</dbReference>
<dbReference type="GO" id="GO:0002161">
    <property type="term" value="F:aminoacyl-tRNA deacylase activity"/>
    <property type="evidence" value="ECO:0007669"/>
    <property type="project" value="InterPro"/>
</dbReference>
<dbReference type="GO" id="GO:0005524">
    <property type="term" value="F:ATP binding"/>
    <property type="evidence" value="ECO:0007669"/>
    <property type="project" value="UniProtKB-UniRule"/>
</dbReference>
<dbReference type="GO" id="GO:0004832">
    <property type="term" value="F:valine-tRNA ligase activity"/>
    <property type="evidence" value="ECO:0007669"/>
    <property type="project" value="UniProtKB-UniRule"/>
</dbReference>
<dbReference type="GO" id="GO:0006438">
    <property type="term" value="P:valyl-tRNA aminoacylation"/>
    <property type="evidence" value="ECO:0007669"/>
    <property type="project" value="UniProtKB-UniRule"/>
</dbReference>
<dbReference type="CDD" id="cd07962">
    <property type="entry name" value="Anticodon_Ia_Val"/>
    <property type="match status" value="1"/>
</dbReference>
<dbReference type="CDD" id="cd00817">
    <property type="entry name" value="ValRS_core"/>
    <property type="match status" value="1"/>
</dbReference>
<dbReference type="FunFam" id="1.10.287.380:FF:000001">
    <property type="entry name" value="Valine--tRNA ligase"/>
    <property type="match status" value="1"/>
</dbReference>
<dbReference type="FunFam" id="1.10.730.10:FF:000014">
    <property type="entry name" value="Valine--tRNA ligase"/>
    <property type="match status" value="1"/>
</dbReference>
<dbReference type="FunFam" id="3.40.50.620:FF:000032">
    <property type="entry name" value="Valine--tRNA ligase"/>
    <property type="match status" value="1"/>
</dbReference>
<dbReference type="FunFam" id="3.40.50.620:FF:000098">
    <property type="entry name" value="Valine--tRNA ligase"/>
    <property type="match status" value="1"/>
</dbReference>
<dbReference type="FunFam" id="3.90.740.10:FF:000005">
    <property type="entry name" value="Valine--tRNA ligase, mitochondrial"/>
    <property type="match status" value="1"/>
</dbReference>
<dbReference type="Gene3D" id="3.40.50.620">
    <property type="entry name" value="HUPs"/>
    <property type="match status" value="2"/>
</dbReference>
<dbReference type="Gene3D" id="1.10.730.10">
    <property type="entry name" value="Isoleucyl-tRNA Synthetase, Domain 1"/>
    <property type="match status" value="1"/>
</dbReference>
<dbReference type="Gene3D" id="1.10.287.380">
    <property type="entry name" value="Valyl-tRNA synthetase, C-terminal domain"/>
    <property type="match status" value="1"/>
</dbReference>
<dbReference type="HAMAP" id="MF_02004">
    <property type="entry name" value="Val_tRNA_synth_type1"/>
    <property type="match status" value="1"/>
</dbReference>
<dbReference type="InterPro" id="IPR001412">
    <property type="entry name" value="aa-tRNA-synth_I_CS"/>
</dbReference>
<dbReference type="InterPro" id="IPR002300">
    <property type="entry name" value="aa-tRNA-synth_Ia"/>
</dbReference>
<dbReference type="InterPro" id="IPR033705">
    <property type="entry name" value="Anticodon_Ia_Val"/>
</dbReference>
<dbReference type="InterPro" id="IPR013155">
    <property type="entry name" value="M/V/L/I-tRNA-synth_anticd-bd"/>
</dbReference>
<dbReference type="InterPro" id="IPR014729">
    <property type="entry name" value="Rossmann-like_a/b/a_fold"/>
</dbReference>
<dbReference type="InterPro" id="IPR010978">
    <property type="entry name" value="tRNA-bd_arm"/>
</dbReference>
<dbReference type="InterPro" id="IPR009080">
    <property type="entry name" value="tRNAsynth_Ia_anticodon-bd"/>
</dbReference>
<dbReference type="InterPro" id="IPR037118">
    <property type="entry name" value="Val-tRNA_synth_C_sf"/>
</dbReference>
<dbReference type="InterPro" id="IPR019499">
    <property type="entry name" value="Val-tRNA_synth_tRNA-bd"/>
</dbReference>
<dbReference type="InterPro" id="IPR009008">
    <property type="entry name" value="Val/Leu/Ile-tRNA-synth_edit"/>
</dbReference>
<dbReference type="InterPro" id="IPR002303">
    <property type="entry name" value="Valyl-tRNA_ligase"/>
</dbReference>
<dbReference type="NCBIfam" id="NF004349">
    <property type="entry name" value="PRK05729.1"/>
    <property type="match status" value="1"/>
</dbReference>
<dbReference type="NCBIfam" id="TIGR00422">
    <property type="entry name" value="valS"/>
    <property type="match status" value="1"/>
</dbReference>
<dbReference type="PANTHER" id="PTHR11946:SF93">
    <property type="entry name" value="VALINE--TRNA LIGASE, CHLOROPLASTIC_MITOCHONDRIAL 2"/>
    <property type="match status" value="1"/>
</dbReference>
<dbReference type="PANTHER" id="PTHR11946">
    <property type="entry name" value="VALYL-TRNA SYNTHETASES"/>
    <property type="match status" value="1"/>
</dbReference>
<dbReference type="Pfam" id="PF08264">
    <property type="entry name" value="Anticodon_1"/>
    <property type="match status" value="1"/>
</dbReference>
<dbReference type="Pfam" id="PF00133">
    <property type="entry name" value="tRNA-synt_1"/>
    <property type="match status" value="1"/>
</dbReference>
<dbReference type="Pfam" id="PF10458">
    <property type="entry name" value="Val_tRNA-synt_C"/>
    <property type="match status" value="1"/>
</dbReference>
<dbReference type="PRINTS" id="PR00986">
    <property type="entry name" value="TRNASYNTHVAL"/>
</dbReference>
<dbReference type="SUPFAM" id="SSF47323">
    <property type="entry name" value="Anticodon-binding domain of a subclass of class I aminoacyl-tRNA synthetases"/>
    <property type="match status" value="1"/>
</dbReference>
<dbReference type="SUPFAM" id="SSF52374">
    <property type="entry name" value="Nucleotidylyl transferase"/>
    <property type="match status" value="1"/>
</dbReference>
<dbReference type="SUPFAM" id="SSF46589">
    <property type="entry name" value="tRNA-binding arm"/>
    <property type="match status" value="1"/>
</dbReference>
<dbReference type="SUPFAM" id="SSF50677">
    <property type="entry name" value="ValRS/IleRS/LeuRS editing domain"/>
    <property type="match status" value="1"/>
</dbReference>
<dbReference type="PROSITE" id="PS00178">
    <property type="entry name" value="AA_TRNA_LIGASE_I"/>
    <property type="match status" value="1"/>
</dbReference>